<sequence length="377" mass="41272">MSDSPVLALLKDLISRRSITPSDEGCQQLLISRLEKLGFECEVMIFADTTNLWARRGTEKPLFCFAGHTDVVPTGPEENWTYPPFEPTVVDGFLFGRGAADMKSGIAAFIIALEQFIKAHQDHQGSIALLITSDEEGPFINGTVRVIETLEARNEKIDYCIVGEPSSTEHVGDTIKNGRRGSLTADLTINGVQGHVAYPHMVENPIHTCIGPLTELSQMEWDKGNKYFPPTSFQVTNFNAGTGASNVVPGEAQIQFNFRYSTELTAEMIIARVVAILQKHKLNYQIKWTYNGSPFITQPGSLTNAVSEAIFAVNGLTTELSTSGGTSDARFIAPTGAQVVELGPGNKTIHKVNESVKIADLEELVHIHRLTLEKLLT</sequence>
<feature type="chain" id="PRO_0000375673" description="Succinyl-diaminopimelate desuccinylase">
    <location>
        <begin position="1"/>
        <end position="377"/>
    </location>
</feature>
<feature type="active site" evidence="1">
    <location>
        <position position="70"/>
    </location>
</feature>
<feature type="active site" description="Proton acceptor" evidence="1">
    <location>
        <position position="135"/>
    </location>
</feature>
<feature type="binding site" evidence="1">
    <location>
        <position position="68"/>
    </location>
    <ligand>
        <name>Zn(2+)</name>
        <dbReference type="ChEBI" id="CHEBI:29105"/>
        <label>1</label>
    </ligand>
</feature>
<feature type="binding site" evidence="1">
    <location>
        <position position="101"/>
    </location>
    <ligand>
        <name>Zn(2+)</name>
        <dbReference type="ChEBI" id="CHEBI:29105"/>
        <label>1</label>
    </ligand>
</feature>
<feature type="binding site" evidence="1">
    <location>
        <position position="101"/>
    </location>
    <ligand>
        <name>Zn(2+)</name>
        <dbReference type="ChEBI" id="CHEBI:29105"/>
        <label>2</label>
    </ligand>
</feature>
<feature type="binding site" evidence="1">
    <location>
        <position position="136"/>
    </location>
    <ligand>
        <name>Zn(2+)</name>
        <dbReference type="ChEBI" id="CHEBI:29105"/>
        <label>2</label>
    </ligand>
</feature>
<feature type="binding site" evidence="1">
    <location>
        <position position="164"/>
    </location>
    <ligand>
        <name>Zn(2+)</name>
        <dbReference type="ChEBI" id="CHEBI:29105"/>
        <label>1</label>
    </ligand>
</feature>
<feature type="binding site" evidence="1">
    <location>
        <position position="350"/>
    </location>
    <ligand>
        <name>Zn(2+)</name>
        <dbReference type="ChEBI" id="CHEBI:29105"/>
        <label>2</label>
    </ligand>
</feature>
<comment type="function">
    <text evidence="1">Catalyzes the hydrolysis of N-succinyl-L,L-diaminopimelic acid (SDAP), forming succinate and LL-2,6-diaminopimelate (DAP), an intermediate involved in the bacterial biosynthesis of lysine and meso-diaminopimelic acid, an essential component of bacterial cell walls.</text>
</comment>
<comment type="catalytic activity">
    <reaction evidence="1">
        <text>N-succinyl-(2S,6S)-2,6-diaminopimelate + H2O = (2S,6S)-2,6-diaminopimelate + succinate</text>
        <dbReference type="Rhea" id="RHEA:22608"/>
        <dbReference type="ChEBI" id="CHEBI:15377"/>
        <dbReference type="ChEBI" id="CHEBI:30031"/>
        <dbReference type="ChEBI" id="CHEBI:57609"/>
        <dbReference type="ChEBI" id="CHEBI:58087"/>
        <dbReference type="EC" id="3.5.1.18"/>
    </reaction>
</comment>
<comment type="cofactor">
    <cofactor evidence="1">
        <name>Zn(2+)</name>
        <dbReference type="ChEBI" id="CHEBI:29105"/>
    </cofactor>
    <cofactor evidence="1">
        <name>Co(2+)</name>
        <dbReference type="ChEBI" id="CHEBI:48828"/>
    </cofactor>
    <text evidence="1">Binds 2 Zn(2+) or Co(2+) ions per subunit.</text>
</comment>
<comment type="pathway">
    <text evidence="1">Amino-acid biosynthesis; L-lysine biosynthesis via DAP pathway; LL-2,6-diaminopimelate from (S)-tetrahydrodipicolinate (succinylase route): step 3/3.</text>
</comment>
<comment type="subunit">
    <text evidence="1">Homodimer.</text>
</comment>
<comment type="similarity">
    <text evidence="1">Belongs to the peptidase M20A family. DapE subfamily.</text>
</comment>
<reference key="1">
    <citation type="journal article" date="2008" name="BMC Genomics">
        <title>Genomics of an extreme psychrophile, Psychromonas ingrahamii.</title>
        <authorList>
            <person name="Riley M."/>
            <person name="Staley J.T."/>
            <person name="Danchin A."/>
            <person name="Wang T.Z."/>
            <person name="Brettin T.S."/>
            <person name="Hauser L.J."/>
            <person name="Land M.L."/>
            <person name="Thompson L.S."/>
        </authorList>
    </citation>
    <scope>NUCLEOTIDE SEQUENCE [LARGE SCALE GENOMIC DNA]</scope>
    <source>
        <strain>DSM 17664 / CCUG 51855 / 37</strain>
    </source>
</reference>
<keyword id="KW-0028">Amino-acid biosynthesis</keyword>
<keyword id="KW-0170">Cobalt</keyword>
<keyword id="KW-0220">Diaminopimelate biosynthesis</keyword>
<keyword id="KW-0378">Hydrolase</keyword>
<keyword id="KW-0457">Lysine biosynthesis</keyword>
<keyword id="KW-0479">Metal-binding</keyword>
<keyword id="KW-1185">Reference proteome</keyword>
<keyword id="KW-0862">Zinc</keyword>
<proteinExistence type="inferred from homology"/>
<protein>
    <recommendedName>
        <fullName evidence="1">Succinyl-diaminopimelate desuccinylase</fullName>
        <shortName evidence="1">SDAP desuccinylase</shortName>
        <ecNumber evidence="1">3.5.1.18</ecNumber>
    </recommendedName>
    <alternativeName>
        <fullName evidence="1">N-succinyl-LL-2,6-diaminoheptanedioate amidohydrolase</fullName>
    </alternativeName>
</protein>
<name>DAPE_PSYIN</name>
<dbReference type="EC" id="3.5.1.18" evidence="1"/>
<dbReference type="EMBL" id="CP000510">
    <property type="protein sequence ID" value="ABM04174.1"/>
    <property type="molecule type" value="Genomic_DNA"/>
</dbReference>
<dbReference type="RefSeq" id="WP_011770734.1">
    <property type="nucleotide sequence ID" value="NC_008709.1"/>
</dbReference>
<dbReference type="SMR" id="A1SXF9"/>
<dbReference type="STRING" id="357804.Ping_2443"/>
<dbReference type="KEGG" id="pin:Ping_2443"/>
<dbReference type="eggNOG" id="COG0624">
    <property type="taxonomic scope" value="Bacteria"/>
</dbReference>
<dbReference type="HOGENOM" id="CLU_021802_4_0_6"/>
<dbReference type="OrthoDB" id="9809784at2"/>
<dbReference type="UniPathway" id="UPA00034">
    <property type="reaction ID" value="UER00021"/>
</dbReference>
<dbReference type="Proteomes" id="UP000000639">
    <property type="component" value="Chromosome"/>
</dbReference>
<dbReference type="GO" id="GO:0008777">
    <property type="term" value="F:acetylornithine deacetylase activity"/>
    <property type="evidence" value="ECO:0007669"/>
    <property type="project" value="TreeGrafter"/>
</dbReference>
<dbReference type="GO" id="GO:0050897">
    <property type="term" value="F:cobalt ion binding"/>
    <property type="evidence" value="ECO:0007669"/>
    <property type="project" value="UniProtKB-UniRule"/>
</dbReference>
<dbReference type="GO" id="GO:0009014">
    <property type="term" value="F:succinyl-diaminopimelate desuccinylase activity"/>
    <property type="evidence" value="ECO:0007669"/>
    <property type="project" value="UniProtKB-UniRule"/>
</dbReference>
<dbReference type="GO" id="GO:0008270">
    <property type="term" value="F:zinc ion binding"/>
    <property type="evidence" value="ECO:0007669"/>
    <property type="project" value="UniProtKB-UniRule"/>
</dbReference>
<dbReference type="GO" id="GO:0019877">
    <property type="term" value="P:diaminopimelate biosynthetic process"/>
    <property type="evidence" value="ECO:0007669"/>
    <property type="project" value="UniProtKB-UniRule"/>
</dbReference>
<dbReference type="GO" id="GO:0006526">
    <property type="term" value="P:L-arginine biosynthetic process"/>
    <property type="evidence" value="ECO:0007669"/>
    <property type="project" value="TreeGrafter"/>
</dbReference>
<dbReference type="GO" id="GO:0009089">
    <property type="term" value="P:lysine biosynthetic process via diaminopimelate"/>
    <property type="evidence" value="ECO:0007669"/>
    <property type="project" value="UniProtKB-UniRule"/>
</dbReference>
<dbReference type="CDD" id="cd03891">
    <property type="entry name" value="M20_DapE_proteobac"/>
    <property type="match status" value="1"/>
</dbReference>
<dbReference type="FunFam" id="3.30.70.360:FF:000011">
    <property type="entry name" value="Succinyl-diaminopimelate desuccinylase"/>
    <property type="match status" value="1"/>
</dbReference>
<dbReference type="FunFam" id="3.40.630.10:FF:000005">
    <property type="entry name" value="Succinyl-diaminopimelate desuccinylase"/>
    <property type="match status" value="1"/>
</dbReference>
<dbReference type="Gene3D" id="3.40.630.10">
    <property type="entry name" value="Zn peptidases"/>
    <property type="match status" value="2"/>
</dbReference>
<dbReference type="HAMAP" id="MF_01690">
    <property type="entry name" value="DapE"/>
    <property type="match status" value="1"/>
</dbReference>
<dbReference type="InterPro" id="IPR001261">
    <property type="entry name" value="ArgE/DapE_CS"/>
</dbReference>
<dbReference type="InterPro" id="IPR036264">
    <property type="entry name" value="Bact_exopeptidase_dim_dom"/>
</dbReference>
<dbReference type="InterPro" id="IPR005941">
    <property type="entry name" value="DapE_proteobac"/>
</dbReference>
<dbReference type="InterPro" id="IPR002933">
    <property type="entry name" value="Peptidase_M20"/>
</dbReference>
<dbReference type="InterPro" id="IPR011650">
    <property type="entry name" value="Peptidase_M20_dimer"/>
</dbReference>
<dbReference type="InterPro" id="IPR050072">
    <property type="entry name" value="Peptidase_M20A"/>
</dbReference>
<dbReference type="NCBIfam" id="TIGR01246">
    <property type="entry name" value="dapE_proteo"/>
    <property type="match status" value="1"/>
</dbReference>
<dbReference type="NCBIfam" id="NF009557">
    <property type="entry name" value="PRK13009.1"/>
    <property type="match status" value="1"/>
</dbReference>
<dbReference type="PANTHER" id="PTHR43808">
    <property type="entry name" value="ACETYLORNITHINE DEACETYLASE"/>
    <property type="match status" value="1"/>
</dbReference>
<dbReference type="PANTHER" id="PTHR43808:SF31">
    <property type="entry name" value="N-ACETYL-L-CITRULLINE DEACETYLASE"/>
    <property type="match status" value="1"/>
</dbReference>
<dbReference type="Pfam" id="PF07687">
    <property type="entry name" value="M20_dimer"/>
    <property type="match status" value="1"/>
</dbReference>
<dbReference type="Pfam" id="PF01546">
    <property type="entry name" value="Peptidase_M20"/>
    <property type="match status" value="1"/>
</dbReference>
<dbReference type="SUPFAM" id="SSF55031">
    <property type="entry name" value="Bacterial exopeptidase dimerisation domain"/>
    <property type="match status" value="1"/>
</dbReference>
<dbReference type="SUPFAM" id="SSF53187">
    <property type="entry name" value="Zn-dependent exopeptidases"/>
    <property type="match status" value="1"/>
</dbReference>
<dbReference type="PROSITE" id="PS00759">
    <property type="entry name" value="ARGE_DAPE_CPG2_2"/>
    <property type="match status" value="1"/>
</dbReference>
<organism>
    <name type="scientific">Psychromonas ingrahamii (strain DSM 17664 / CCUG 51855 / 37)</name>
    <dbReference type="NCBI Taxonomy" id="357804"/>
    <lineage>
        <taxon>Bacteria</taxon>
        <taxon>Pseudomonadati</taxon>
        <taxon>Pseudomonadota</taxon>
        <taxon>Gammaproteobacteria</taxon>
        <taxon>Alteromonadales</taxon>
        <taxon>Psychromonadaceae</taxon>
        <taxon>Psychromonas</taxon>
    </lineage>
</organism>
<accession>A1SXF9</accession>
<gene>
    <name evidence="1" type="primary">dapE</name>
    <name type="ordered locus">Ping_2443</name>
</gene>
<evidence type="ECO:0000255" key="1">
    <source>
        <dbReference type="HAMAP-Rule" id="MF_01690"/>
    </source>
</evidence>